<proteinExistence type="inferred from homology"/>
<reference key="1">
    <citation type="journal article" date="2002" name="Nucleic Acids Res.">
        <title>Genome sequence of Shigella flexneri 2a: insights into pathogenicity through comparison with genomes of Escherichia coli K12 and O157.</title>
        <authorList>
            <person name="Jin Q."/>
            <person name="Yuan Z."/>
            <person name="Xu J."/>
            <person name="Wang Y."/>
            <person name="Shen Y."/>
            <person name="Lu W."/>
            <person name="Wang J."/>
            <person name="Liu H."/>
            <person name="Yang J."/>
            <person name="Yang F."/>
            <person name="Zhang X."/>
            <person name="Zhang J."/>
            <person name="Yang G."/>
            <person name="Wu H."/>
            <person name="Qu D."/>
            <person name="Dong J."/>
            <person name="Sun L."/>
            <person name="Xue Y."/>
            <person name="Zhao A."/>
            <person name="Gao Y."/>
            <person name="Zhu J."/>
            <person name="Kan B."/>
            <person name="Ding K."/>
            <person name="Chen S."/>
            <person name="Cheng H."/>
            <person name="Yao Z."/>
            <person name="He B."/>
            <person name="Chen R."/>
            <person name="Ma D."/>
            <person name="Qiang B."/>
            <person name="Wen Y."/>
            <person name="Hou Y."/>
            <person name="Yu J."/>
        </authorList>
    </citation>
    <scope>NUCLEOTIDE SEQUENCE [LARGE SCALE GENOMIC DNA]</scope>
    <source>
        <strain>301 / Serotype 2a</strain>
    </source>
</reference>
<reference key="2">
    <citation type="journal article" date="2003" name="Infect. Immun.">
        <title>Complete genome sequence and comparative genomics of Shigella flexneri serotype 2a strain 2457T.</title>
        <authorList>
            <person name="Wei J."/>
            <person name="Goldberg M.B."/>
            <person name="Burland V."/>
            <person name="Venkatesan M.M."/>
            <person name="Deng W."/>
            <person name="Fournier G."/>
            <person name="Mayhew G.F."/>
            <person name="Plunkett G. III"/>
            <person name="Rose D.J."/>
            <person name="Darling A."/>
            <person name="Mau B."/>
            <person name="Perna N.T."/>
            <person name="Payne S.M."/>
            <person name="Runyen-Janecky L.J."/>
            <person name="Zhou S."/>
            <person name="Schwartz D.C."/>
            <person name="Blattner F.R."/>
        </authorList>
    </citation>
    <scope>NUCLEOTIDE SEQUENCE [LARGE SCALE GENOMIC DNA]</scope>
    <source>
        <strain>ATCC 700930 / 2457T / Serotype 2a</strain>
    </source>
</reference>
<gene>
    <name type="primary">ybhG</name>
    <name type="ordered locus">SF0745</name>
    <name type="ordered locus">S0786</name>
</gene>
<accession>Q83S36</accession>
<protein>
    <recommendedName>
        <fullName>UPF0194 membrane protein YbhG</fullName>
    </recommendedName>
</protein>
<organism>
    <name type="scientific">Shigella flexneri</name>
    <dbReference type="NCBI Taxonomy" id="623"/>
    <lineage>
        <taxon>Bacteria</taxon>
        <taxon>Pseudomonadati</taxon>
        <taxon>Pseudomonadota</taxon>
        <taxon>Gammaproteobacteria</taxon>
        <taxon>Enterobacterales</taxon>
        <taxon>Enterobacteriaceae</taxon>
        <taxon>Shigella</taxon>
    </lineage>
</organism>
<sequence length="332" mass="36475">MMKKPVVIGLAVVVLAAVVAGGYWWYQSRQDNGLTLYGNVDIRTVNLSFRVGGRVESLAVDEGDAIKAGQVLGELDHKPYEIALMQAKAGVSVAQAQYDLMLAGYRDEEIAQAAAAVKQAQAAYDYEQNFYNRQQGLWKSRTISANDLENARSSRDQAQATLKSAQDKLRQYRSGNREQDIAQAKASLEQAQAQLAQAELNLQDSTLIAPSDGTLLTRAVEPGTVLNEGGTVFTVSLTRPVWVRAYVDERNLDQAQPGRKVLLYTDGRPDKPYHGQIGFVSPTAEFTPKTVETPDLRTDLVYRLRIVVTDADDALRQGMPVTVQFGDEAGHE</sequence>
<keyword id="KW-0175">Coiled coil</keyword>
<keyword id="KW-0574">Periplasm</keyword>
<keyword id="KW-1185">Reference proteome</keyword>
<keyword id="KW-0732">Signal</keyword>
<comment type="subcellular location">
    <subcellularLocation>
        <location evidence="2">Periplasm</location>
    </subcellularLocation>
</comment>
<comment type="similarity">
    <text evidence="2">Belongs to the UPF0194 family.</text>
</comment>
<feature type="signal peptide" evidence="1">
    <location>
        <begin position="1"/>
        <end position="16"/>
    </location>
</feature>
<feature type="chain" id="PRO_0000088752" description="UPF0194 membrane protein YbhG">
    <location>
        <begin position="17"/>
        <end position="332"/>
    </location>
</feature>
<feature type="coiled-coil region" evidence="1">
    <location>
        <begin position="141"/>
        <end position="210"/>
    </location>
</feature>
<feature type="sequence conflict" description="In Ref. 2; AAP16257." evidence="2" ref="2">
    <original>E</original>
    <variation>A</variation>
    <location>
        <position position="127"/>
    </location>
</feature>
<name>YBHG_SHIFL</name>
<evidence type="ECO:0000255" key="1"/>
<evidence type="ECO:0000305" key="2"/>
<dbReference type="EMBL" id="AE005674">
    <property type="protein sequence ID" value="AAN42380.1"/>
    <property type="molecule type" value="Genomic_DNA"/>
</dbReference>
<dbReference type="EMBL" id="AE014073">
    <property type="protein sequence ID" value="AAP16257.1"/>
    <property type="molecule type" value="Genomic_DNA"/>
</dbReference>
<dbReference type="RefSeq" id="NP_706673.1">
    <property type="nucleotide sequence ID" value="NC_004337.2"/>
</dbReference>
<dbReference type="SMR" id="Q83S36"/>
<dbReference type="STRING" id="198214.SF0745"/>
<dbReference type="PaxDb" id="198214-SF0745"/>
<dbReference type="GeneID" id="1023716"/>
<dbReference type="KEGG" id="sfl:SF0745"/>
<dbReference type="KEGG" id="sfx:S0786"/>
<dbReference type="PATRIC" id="fig|198214.7.peg.866"/>
<dbReference type="HOGENOM" id="CLU_018816_6_3_6"/>
<dbReference type="Proteomes" id="UP000001006">
    <property type="component" value="Chromosome"/>
</dbReference>
<dbReference type="Proteomes" id="UP000002673">
    <property type="component" value="Chromosome"/>
</dbReference>
<dbReference type="GO" id="GO:0042597">
    <property type="term" value="C:periplasmic space"/>
    <property type="evidence" value="ECO:0007669"/>
    <property type="project" value="UniProtKB-SubCell"/>
</dbReference>
<dbReference type="FunFam" id="1.10.287.470:FF:000004">
    <property type="entry name" value="UPF0194 membrane protein YbhG"/>
    <property type="match status" value="1"/>
</dbReference>
<dbReference type="FunFam" id="2.40.30.170:FF:000005">
    <property type="entry name" value="UPF0194 membrane protein YbhG"/>
    <property type="match status" value="1"/>
</dbReference>
<dbReference type="FunFam" id="2.40.50.100:FF:000025">
    <property type="entry name" value="UPF0194 membrane protein YbhG"/>
    <property type="match status" value="1"/>
</dbReference>
<dbReference type="Gene3D" id="2.40.30.170">
    <property type="match status" value="1"/>
</dbReference>
<dbReference type="Gene3D" id="2.40.50.100">
    <property type="match status" value="2"/>
</dbReference>
<dbReference type="Gene3D" id="1.10.287.470">
    <property type="entry name" value="Helix hairpin bin"/>
    <property type="match status" value="2"/>
</dbReference>
<dbReference type="HAMAP" id="MF_01304">
    <property type="entry name" value="UPF0194"/>
    <property type="match status" value="1"/>
</dbReference>
<dbReference type="InterPro" id="IPR032317">
    <property type="entry name" value="CusB_D23"/>
</dbReference>
<dbReference type="InterPro" id="IPR022936">
    <property type="entry name" value="UPF0194_membrane_YbhG"/>
</dbReference>
<dbReference type="InterPro" id="IPR050465">
    <property type="entry name" value="UPF0194_transport"/>
</dbReference>
<dbReference type="NCBIfam" id="NF002939">
    <property type="entry name" value="PRK03598.1"/>
    <property type="match status" value="1"/>
</dbReference>
<dbReference type="PANTHER" id="PTHR32347">
    <property type="entry name" value="EFFLUX SYSTEM COMPONENT YKNX-RELATED"/>
    <property type="match status" value="1"/>
</dbReference>
<dbReference type="PANTHER" id="PTHR32347:SF29">
    <property type="entry name" value="UPF0194 MEMBRANE PROTEIN YBHG"/>
    <property type="match status" value="1"/>
</dbReference>
<dbReference type="Pfam" id="PF16576">
    <property type="entry name" value="HlyD_D23"/>
    <property type="match status" value="1"/>
</dbReference>
<dbReference type="SUPFAM" id="SSF111369">
    <property type="entry name" value="HlyD-like secretion proteins"/>
    <property type="match status" value="2"/>
</dbReference>